<name>CAPPA_PICTO</name>
<gene>
    <name evidence="1" type="primary">ppcA</name>
    <name type="ordered locus">PTO0964</name>
</gene>
<organism>
    <name type="scientific">Picrophilus torridus (strain ATCC 700027 / DSM 9790 / JCM 10055 / NBRC 100828 / KAW 2/3)</name>
    <dbReference type="NCBI Taxonomy" id="1122961"/>
    <lineage>
        <taxon>Archaea</taxon>
        <taxon>Methanobacteriati</taxon>
        <taxon>Thermoplasmatota</taxon>
        <taxon>Thermoplasmata</taxon>
        <taxon>Thermoplasmatales</taxon>
        <taxon>Picrophilaceae</taxon>
        <taxon>Picrophilus</taxon>
    </lineage>
</organism>
<feature type="chain" id="PRO_0000309606" description="Phosphoenolpyruvate carboxylase">
    <location>
        <begin position="1"/>
        <end position="508"/>
    </location>
</feature>
<accession>Q6L0F3</accession>
<reference key="1">
    <citation type="journal article" date="2004" name="Proc. Natl. Acad. Sci. U.S.A.">
        <title>Genome sequence of Picrophilus torridus and its implications for life around pH 0.</title>
        <authorList>
            <person name="Fuetterer O."/>
            <person name="Angelov A."/>
            <person name="Liesegang H."/>
            <person name="Gottschalk G."/>
            <person name="Schleper C."/>
            <person name="Schepers B."/>
            <person name="Dock C."/>
            <person name="Antranikian G."/>
            <person name="Liebl W."/>
        </authorList>
    </citation>
    <scope>NUCLEOTIDE SEQUENCE [LARGE SCALE GENOMIC DNA]</scope>
    <source>
        <strain>ATCC 700027 / DSM 9790 / JCM 10055 / NBRC 100828 / KAW 2/3</strain>
    </source>
</reference>
<protein>
    <recommendedName>
        <fullName evidence="1">Phosphoenolpyruvate carboxylase</fullName>
        <shortName evidence="1">PEPC</shortName>
        <shortName evidence="1">PEPCase</shortName>
        <ecNumber evidence="1">4.1.1.31</ecNumber>
    </recommendedName>
</protein>
<comment type="function">
    <text evidence="1">Catalyzes the irreversible beta-carboxylation of phosphoenolpyruvate (PEP) to form oxaloacetate (OAA), a four-carbon dicarboxylic acid source for the tricarboxylic acid cycle.</text>
</comment>
<comment type="catalytic activity">
    <reaction evidence="1">
        <text>oxaloacetate + phosphate = phosphoenolpyruvate + hydrogencarbonate</text>
        <dbReference type="Rhea" id="RHEA:28370"/>
        <dbReference type="ChEBI" id="CHEBI:16452"/>
        <dbReference type="ChEBI" id="CHEBI:17544"/>
        <dbReference type="ChEBI" id="CHEBI:43474"/>
        <dbReference type="ChEBI" id="CHEBI:58702"/>
        <dbReference type="EC" id="4.1.1.31"/>
    </reaction>
</comment>
<comment type="cofactor">
    <cofactor evidence="1">
        <name>Mg(2+)</name>
        <dbReference type="ChEBI" id="CHEBI:18420"/>
    </cofactor>
</comment>
<comment type="subunit">
    <text evidence="1">Homotetramer.</text>
</comment>
<comment type="similarity">
    <text evidence="1">Belongs to the PEPCase type 2 family.</text>
</comment>
<proteinExistence type="inferred from homology"/>
<sequence length="508" mass="58714">MAIAMIPKTMSTQHPDNAKMPAWASEKSMIRNDDEVEEAYQCYTIGIKEVMWDAEGKDVDTHVLRKLISKNHEFFEKNVLGSDIFLTYRVPNPAIEGTERKVLTETLESIPVNYDVFNTVYKRDIPPIFEVILPFTTSSKDLLNIAKYYEKAVAARDEIELYDNVMVKNILGETKPKKINIIPLIEDKDSMFNIDGIVKNFARAVSAKKMRVFIARSDPAMNYGMIPAVLMSKYAASRLCKMNDDIENYPIVGVGSSTFRGRFSPENIEKSLYEYSNYYTFTLQSAFKYDYPQDSVKNSINIINRHERSFDYLEDYEEEIIKNAVNKYVINYQKIIEKLAPAINNITMYLPKRRSRKLHIGLFGYSRSTGNVTLPRAISFVGAMYSMGLPPEIIGISSLLNMKDDELDIIEKTYINLRSDIMESSSYLNYEVFDALKDVYKIDQETINMIKADVKYIENNYGIKSDLGYERERHNYLSSLMNLAFKNHDFENTRKYILDMALIRKFIG</sequence>
<keyword id="KW-0120">Carbon dioxide fixation</keyword>
<keyword id="KW-0456">Lyase</keyword>
<keyword id="KW-0460">Magnesium</keyword>
<dbReference type="EC" id="4.1.1.31" evidence="1"/>
<dbReference type="EMBL" id="AE017261">
    <property type="protein sequence ID" value="AAT43549.1"/>
    <property type="molecule type" value="Genomic_DNA"/>
</dbReference>
<dbReference type="SMR" id="Q6L0F3"/>
<dbReference type="FunCoup" id="Q6L0F3">
    <property type="interactions" value="67"/>
</dbReference>
<dbReference type="STRING" id="263820.PTO0964"/>
<dbReference type="PaxDb" id="263820-PTO0964"/>
<dbReference type="KEGG" id="pto:PTO0964"/>
<dbReference type="PATRIC" id="fig|263820.9.peg.1003"/>
<dbReference type="eggNOG" id="arCOG04435">
    <property type="taxonomic scope" value="Archaea"/>
</dbReference>
<dbReference type="HOGENOM" id="CLU_517433_0_0_2"/>
<dbReference type="InParanoid" id="Q6L0F3"/>
<dbReference type="OrthoDB" id="85849at2157"/>
<dbReference type="Proteomes" id="UP000000438">
    <property type="component" value="Chromosome"/>
</dbReference>
<dbReference type="GO" id="GO:0000287">
    <property type="term" value="F:magnesium ion binding"/>
    <property type="evidence" value="ECO:0007669"/>
    <property type="project" value="UniProtKB-UniRule"/>
</dbReference>
<dbReference type="GO" id="GO:0008964">
    <property type="term" value="F:phosphoenolpyruvate carboxylase activity"/>
    <property type="evidence" value="ECO:0007669"/>
    <property type="project" value="UniProtKB-UniRule"/>
</dbReference>
<dbReference type="GO" id="GO:0015977">
    <property type="term" value="P:carbon fixation"/>
    <property type="evidence" value="ECO:0007669"/>
    <property type="project" value="UniProtKB-UniRule"/>
</dbReference>
<dbReference type="GO" id="GO:0006107">
    <property type="term" value="P:oxaloacetate metabolic process"/>
    <property type="evidence" value="ECO:0007669"/>
    <property type="project" value="UniProtKB-UniRule"/>
</dbReference>
<dbReference type="GO" id="GO:0006099">
    <property type="term" value="P:tricarboxylic acid cycle"/>
    <property type="evidence" value="ECO:0007669"/>
    <property type="project" value="InterPro"/>
</dbReference>
<dbReference type="HAMAP" id="MF_01904">
    <property type="entry name" value="PEPcase_type2"/>
    <property type="match status" value="1"/>
</dbReference>
<dbReference type="InterPro" id="IPR007566">
    <property type="entry name" value="PEP_COase_arc-type"/>
</dbReference>
<dbReference type="InterPro" id="IPR015813">
    <property type="entry name" value="Pyrv/PenolPyrv_kinase-like_dom"/>
</dbReference>
<dbReference type="NCBIfam" id="TIGR02751">
    <property type="entry name" value="PEPCase_arch"/>
    <property type="match status" value="1"/>
</dbReference>
<dbReference type="Pfam" id="PF14010">
    <property type="entry name" value="PEPcase_2"/>
    <property type="match status" value="1"/>
</dbReference>
<dbReference type="PIRSF" id="PIRSF006677">
    <property type="entry name" value="UCP006677"/>
    <property type="match status" value="1"/>
</dbReference>
<dbReference type="SUPFAM" id="SSF51621">
    <property type="entry name" value="Phosphoenolpyruvate/pyruvate domain"/>
    <property type="match status" value="1"/>
</dbReference>
<evidence type="ECO:0000255" key="1">
    <source>
        <dbReference type="HAMAP-Rule" id="MF_01904"/>
    </source>
</evidence>